<name>SYH_THEPX</name>
<keyword id="KW-0030">Aminoacyl-tRNA synthetase</keyword>
<keyword id="KW-0067">ATP-binding</keyword>
<keyword id="KW-0963">Cytoplasm</keyword>
<keyword id="KW-0436">Ligase</keyword>
<keyword id="KW-0547">Nucleotide-binding</keyword>
<keyword id="KW-0648">Protein biosynthesis</keyword>
<protein>
    <recommendedName>
        <fullName evidence="1">Histidine--tRNA ligase</fullName>
        <ecNumber evidence="1">6.1.1.21</ecNumber>
    </recommendedName>
    <alternativeName>
        <fullName evidence="1">Histidyl-tRNA synthetase</fullName>
        <shortName evidence="1">HisRS</shortName>
    </alternativeName>
</protein>
<reference key="1">
    <citation type="submission" date="2008-01" db="EMBL/GenBank/DDBJ databases">
        <title>Complete sequence of Thermoanaerobacter sp. X514.</title>
        <authorList>
            <consortium name="US DOE Joint Genome Institute"/>
            <person name="Copeland A."/>
            <person name="Lucas S."/>
            <person name="Lapidus A."/>
            <person name="Barry K."/>
            <person name="Glavina del Rio T."/>
            <person name="Dalin E."/>
            <person name="Tice H."/>
            <person name="Pitluck S."/>
            <person name="Bruce D."/>
            <person name="Goodwin L."/>
            <person name="Saunders E."/>
            <person name="Brettin T."/>
            <person name="Detter J.C."/>
            <person name="Han C."/>
            <person name="Schmutz J."/>
            <person name="Larimer F."/>
            <person name="Land M."/>
            <person name="Hauser L."/>
            <person name="Kyrpides N."/>
            <person name="Kim E."/>
            <person name="Hemme C."/>
            <person name="Fields M.W."/>
            <person name="He Z."/>
            <person name="Zhou J."/>
            <person name="Richardson P."/>
        </authorList>
    </citation>
    <scope>NUCLEOTIDE SEQUENCE [LARGE SCALE GENOMIC DNA]</scope>
    <source>
        <strain>X514</strain>
    </source>
</reference>
<gene>
    <name evidence="1" type="primary">hisS</name>
    <name type="ordered locus">Teth514_1472</name>
</gene>
<accession>B0K0N4</accession>
<evidence type="ECO:0000255" key="1">
    <source>
        <dbReference type="HAMAP-Rule" id="MF_00127"/>
    </source>
</evidence>
<feature type="chain" id="PRO_1000095606" description="Histidine--tRNA ligase">
    <location>
        <begin position="1"/>
        <end position="418"/>
    </location>
</feature>
<comment type="catalytic activity">
    <reaction evidence="1">
        <text>tRNA(His) + L-histidine + ATP = L-histidyl-tRNA(His) + AMP + diphosphate + H(+)</text>
        <dbReference type="Rhea" id="RHEA:17313"/>
        <dbReference type="Rhea" id="RHEA-COMP:9665"/>
        <dbReference type="Rhea" id="RHEA-COMP:9689"/>
        <dbReference type="ChEBI" id="CHEBI:15378"/>
        <dbReference type="ChEBI" id="CHEBI:30616"/>
        <dbReference type="ChEBI" id="CHEBI:33019"/>
        <dbReference type="ChEBI" id="CHEBI:57595"/>
        <dbReference type="ChEBI" id="CHEBI:78442"/>
        <dbReference type="ChEBI" id="CHEBI:78527"/>
        <dbReference type="ChEBI" id="CHEBI:456215"/>
        <dbReference type="EC" id="6.1.1.21"/>
    </reaction>
</comment>
<comment type="subunit">
    <text evidence="1">Homodimer.</text>
</comment>
<comment type="subcellular location">
    <subcellularLocation>
        <location evidence="1">Cytoplasm</location>
    </subcellularLocation>
</comment>
<comment type="similarity">
    <text evidence="1">Belongs to the class-II aminoacyl-tRNA synthetase family.</text>
</comment>
<proteinExistence type="inferred from homology"/>
<organism>
    <name type="scientific">Thermoanaerobacter sp. (strain X514)</name>
    <dbReference type="NCBI Taxonomy" id="399726"/>
    <lineage>
        <taxon>Bacteria</taxon>
        <taxon>Bacillati</taxon>
        <taxon>Bacillota</taxon>
        <taxon>Clostridia</taxon>
        <taxon>Thermoanaerobacterales</taxon>
        <taxon>Thermoanaerobacteraceae</taxon>
        <taxon>Thermoanaerobacter</taxon>
    </lineage>
</organism>
<sequence>MLTKAPRGTKDILPSESYKWQYIEGLIREICDVYGFKEIRTPGFEHTELFLRGVGESTDIVRKEMYTFTDKGGRSITLKAEGTSPAVRAFIEHNLYAETQPTKLYYITPVYRYERPQSGRLREHHQFGVEIFGAKNASADAEVISVAMTLLKKLGLNNLELRINSVGCPVCRKNYNKVLKDFLKDNLEYLCDDCKVRYEINPLRVLDCKVESCQRITKDAPLITDYLCDDCKSHFEELQKYLDIMGYDYIIDPRIVRGLDYYTKTAFEIISKDIGAQGTVCGGGRYDGLIEECGGPSMPGVGFGMGLERLLLTLEQNGIEIPKPEGIDLFIAYVGEEAKLFTFALANKLRFNGLKVERDNMDRSLKAQMKYANKLNAKFAIVIGEEEMKENKVKLKNMRDGSEVEISIDEIEQRIKNI</sequence>
<dbReference type="EC" id="6.1.1.21" evidence="1"/>
<dbReference type="EMBL" id="CP000923">
    <property type="protein sequence ID" value="ABY92759.1"/>
    <property type="molecule type" value="Genomic_DNA"/>
</dbReference>
<dbReference type="RefSeq" id="WP_009052301.1">
    <property type="nucleotide sequence ID" value="NC_010320.1"/>
</dbReference>
<dbReference type="SMR" id="B0K0N4"/>
<dbReference type="KEGG" id="tex:Teth514_1472"/>
<dbReference type="HOGENOM" id="CLU_025113_1_1_9"/>
<dbReference type="Proteomes" id="UP000002155">
    <property type="component" value="Chromosome"/>
</dbReference>
<dbReference type="GO" id="GO:0005737">
    <property type="term" value="C:cytoplasm"/>
    <property type="evidence" value="ECO:0007669"/>
    <property type="project" value="UniProtKB-SubCell"/>
</dbReference>
<dbReference type="GO" id="GO:0005524">
    <property type="term" value="F:ATP binding"/>
    <property type="evidence" value="ECO:0007669"/>
    <property type="project" value="UniProtKB-UniRule"/>
</dbReference>
<dbReference type="GO" id="GO:0140096">
    <property type="term" value="F:catalytic activity, acting on a protein"/>
    <property type="evidence" value="ECO:0007669"/>
    <property type="project" value="UniProtKB-ARBA"/>
</dbReference>
<dbReference type="GO" id="GO:0004821">
    <property type="term" value="F:histidine-tRNA ligase activity"/>
    <property type="evidence" value="ECO:0007669"/>
    <property type="project" value="UniProtKB-UniRule"/>
</dbReference>
<dbReference type="GO" id="GO:0016740">
    <property type="term" value="F:transferase activity"/>
    <property type="evidence" value="ECO:0007669"/>
    <property type="project" value="UniProtKB-ARBA"/>
</dbReference>
<dbReference type="GO" id="GO:0006427">
    <property type="term" value="P:histidyl-tRNA aminoacylation"/>
    <property type="evidence" value="ECO:0007669"/>
    <property type="project" value="UniProtKB-UniRule"/>
</dbReference>
<dbReference type="CDD" id="cd00773">
    <property type="entry name" value="HisRS-like_core"/>
    <property type="match status" value="1"/>
</dbReference>
<dbReference type="CDD" id="cd00859">
    <property type="entry name" value="HisRS_anticodon"/>
    <property type="match status" value="1"/>
</dbReference>
<dbReference type="FunFam" id="3.30.930.10:FF:000005">
    <property type="entry name" value="Histidine--tRNA ligase"/>
    <property type="match status" value="1"/>
</dbReference>
<dbReference type="Gene3D" id="3.40.50.800">
    <property type="entry name" value="Anticodon-binding domain"/>
    <property type="match status" value="1"/>
</dbReference>
<dbReference type="Gene3D" id="3.30.930.10">
    <property type="entry name" value="Bira Bifunctional Protein, Domain 2"/>
    <property type="match status" value="1"/>
</dbReference>
<dbReference type="HAMAP" id="MF_00127">
    <property type="entry name" value="His_tRNA_synth"/>
    <property type="match status" value="1"/>
</dbReference>
<dbReference type="InterPro" id="IPR006195">
    <property type="entry name" value="aa-tRNA-synth_II"/>
</dbReference>
<dbReference type="InterPro" id="IPR045864">
    <property type="entry name" value="aa-tRNA-synth_II/BPL/LPL"/>
</dbReference>
<dbReference type="InterPro" id="IPR004154">
    <property type="entry name" value="Anticodon-bd"/>
</dbReference>
<dbReference type="InterPro" id="IPR036621">
    <property type="entry name" value="Anticodon-bd_dom_sf"/>
</dbReference>
<dbReference type="InterPro" id="IPR015807">
    <property type="entry name" value="His-tRNA-ligase"/>
</dbReference>
<dbReference type="InterPro" id="IPR041715">
    <property type="entry name" value="HisRS-like_core"/>
</dbReference>
<dbReference type="InterPro" id="IPR004516">
    <property type="entry name" value="HisRS/HisZ"/>
</dbReference>
<dbReference type="InterPro" id="IPR033656">
    <property type="entry name" value="HisRS_anticodon"/>
</dbReference>
<dbReference type="NCBIfam" id="TIGR00442">
    <property type="entry name" value="hisS"/>
    <property type="match status" value="1"/>
</dbReference>
<dbReference type="PANTHER" id="PTHR43707:SF1">
    <property type="entry name" value="HISTIDINE--TRNA LIGASE, MITOCHONDRIAL-RELATED"/>
    <property type="match status" value="1"/>
</dbReference>
<dbReference type="PANTHER" id="PTHR43707">
    <property type="entry name" value="HISTIDYL-TRNA SYNTHETASE"/>
    <property type="match status" value="1"/>
</dbReference>
<dbReference type="Pfam" id="PF03129">
    <property type="entry name" value="HGTP_anticodon"/>
    <property type="match status" value="1"/>
</dbReference>
<dbReference type="Pfam" id="PF13393">
    <property type="entry name" value="tRNA-synt_His"/>
    <property type="match status" value="1"/>
</dbReference>
<dbReference type="PIRSF" id="PIRSF001549">
    <property type="entry name" value="His-tRNA_synth"/>
    <property type="match status" value="1"/>
</dbReference>
<dbReference type="SUPFAM" id="SSF52954">
    <property type="entry name" value="Class II aaRS ABD-related"/>
    <property type="match status" value="1"/>
</dbReference>
<dbReference type="SUPFAM" id="SSF55681">
    <property type="entry name" value="Class II aaRS and biotin synthetases"/>
    <property type="match status" value="1"/>
</dbReference>
<dbReference type="PROSITE" id="PS50862">
    <property type="entry name" value="AA_TRNA_LIGASE_II"/>
    <property type="match status" value="1"/>
</dbReference>